<name>COXX_LEPBJ</name>
<protein>
    <recommendedName>
        <fullName evidence="1">Protoheme IX farnesyltransferase</fullName>
        <ecNumber evidence="1">2.5.1.141</ecNumber>
    </recommendedName>
    <alternativeName>
        <fullName evidence="1">Heme B farnesyltransferase</fullName>
    </alternativeName>
    <alternativeName>
        <fullName evidence="1">Heme O synthase</fullName>
    </alternativeName>
</protein>
<reference key="1">
    <citation type="journal article" date="2006" name="Proc. Natl. Acad. Sci. U.S.A.">
        <title>Genome reduction in Leptospira borgpetersenii reflects limited transmission potential.</title>
        <authorList>
            <person name="Bulach D.M."/>
            <person name="Zuerner R.L."/>
            <person name="Wilson P."/>
            <person name="Seemann T."/>
            <person name="McGrath A."/>
            <person name="Cullen P.A."/>
            <person name="Davis J."/>
            <person name="Johnson M."/>
            <person name="Kuczek E."/>
            <person name="Alt D.P."/>
            <person name="Peterson-Burch B."/>
            <person name="Coppel R.L."/>
            <person name="Rood J.I."/>
            <person name="Davies J.K."/>
            <person name="Adler B."/>
        </authorList>
    </citation>
    <scope>NUCLEOTIDE SEQUENCE [LARGE SCALE GENOMIC DNA]</scope>
    <source>
        <strain>JB197</strain>
    </source>
</reference>
<evidence type="ECO:0000255" key="1">
    <source>
        <dbReference type="HAMAP-Rule" id="MF_00154"/>
    </source>
</evidence>
<keyword id="KW-0997">Cell inner membrane</keyword>
<keyword id="KW-1003">Cell membrane</keyword>
<keyword id="KW-0350">Heme biosynthesis</keyword>
<keyword id="KW-0472">Membrane</keyword>
<keyword id="KW-0808">Transferase</keyword>
<keyword id="KW-0812">Transmembrane</keyword>
<keyword id="KW-1133">Transmembrane helix</keyword>
<feature type="chain" id="PRO_0000327067" description="Protoheme IX farnesyltransferase">
    <location>
        <begin position="1"/>
        <end position="289"/>
    </location>
</feature>
<feature type="transmembrane region" description="Helical" evidence="1">
    <location>
        <begin position="13"/>
        <end position="33"/>
    </location>
</feature>
<feature type="transmembrane region" description="Helical" evidence="1">
    <location>
        <begin position="40"/>
        <end position="60"/>
    </location>
</feature>
<feature type="transmembrane region" description="Helical" evidence="1">
    <location>
        <begin position="85"/>
        <end position="105"/>
    </location>
</feature>
<feature type="transmembrane region" description="Helical" evidence="1">
    <location>
        <begin position="111"/>
        <end position="131"/>
    </location>
</feature>
<feature type="transmembrane region" description="Helical" evidence="1">
    <location>
        <begin position="139"/>
        <end position="159"/>
    </location>
</feature>
<feature type="transmembrane region" description="Helical" evidence="1">
    <location>
        <begin position="168"/>
        <end position="188"/>
    </location>
</feature>
<feature type="transmembrane region" description="Helical" evidence="1">
    <location>
        <begin position="212"/>
        <end position="232"/>
    </location>
</feature>
<feature type="transmembrane region" description="Helical" evidence="1">
    <location>
        <begin position="234"/>
        <end position="254"/>
    </location>
</feature>
<feature type="transmembrane region" description="Helical" evidence="1">
    <location>
        <begin position="269"/>
        <end position="289"/>
    </location>
</feature>
<accession>Q04PG4</accession>
<proteinExistence type="inferred from homology"/>
<gene>
    <name evidence="1" type="primary">ctaB</name>
    <name type="ordered locus">LBJ_2799</name>
</gene>
<organism>
    <name type="scientific">Leptospira borgpetersenii serovar Hardjo-bovis (strain JB197)</name>
    <dbReference type="NCBI Taxonomy" id="355277"/>
    <lineage>
        <taxon>Bacteria</taxon>
        <taxon>Pseudomonadati</taxon>
        <taxon>Spirochaetota</taxon>
        <taxon>Spirochaetia</taxon>
        <taxon>Leptospirales</taxon>
        <taxon>Leptospiraceae</taxon>
        <taxon>Leptospira</taxon>
    </lineage>
</organism>
<comment type="function">
    <text evidence="1">Converts heme B (protoheme IX) to heme O by substitution of the vinyl group on carbon 2 of heme B porphyrin ring with a hydroxyethyl farnesyl side group.</text>
</comment>
<comment type="catalytic activity">
    <reaction evidence="1">
        <text>heme b + (2E,6E)-farnesyl diphosphate + H2O = Fe(II)-heme o + diphosphate</text>
        <dbReference type="Rhea" id="RHEA:28070"/>
        <dbReference type="ChEBI" id="CHEBI:15377"/>
        <dbReference type="ChEBI" id="CHEBI:33019"/>
        <dbReference type="ChEBI" id="CHEBI:60344"/>
        <dbReference type="ChEBI" id="CHEBI:60530"/>
        <dbReference type="ChEBI" id="CHEBI:175763"/>
        <dbReference type="EC" id="2.5.1.141"/>
    </reaction>
</comment>
<comment type="pathway">
    <text evidence="1">Porphyrin-containing compound metabolism; heme O biosynthesis; heme O from protoheme: step 1/1.</text>
</comment>
<comment type="subcellular location">
    <subcellularLocation>
        <location evidence="1">Cell inner membrane</location>
        <topology evidence="1">Multi-pass membrane protein</topology>
    </subcellularLocation>
</comment>
<comment type="miscellaneous">
    <text evidence="1">Carbon 2 of the heme B porphyrin ring is defined according to the Fischer nomenclature.</text>
</comment>
<comment type="similarity">
    <text evidence="1">Belongs to the UbiA prenyltransferase family. Protoheme IX farnesyltransferase subfamily.</text>
</comment>
<sequence>MASSTFFSDWNQLIKPRVTSLVLATIIPGLYLASEQPPSVFLITVTLFGTFLMSSASFIFNQVIERDRDAKMKRTSNRPIPSERISIPQATLVGISMMGLSFYMLTVYVNLLTALCALTALISYVFLYTIFLKPRTTQNIVIGGVAGCVGPLIGYAAIGNSLPIQAWILFTMIFLWTPAHFWALAIFLKEDYSDANFPMLPVVKGINQTTKSIFFYTILYSLSCVSFYFLEPSMGLLYLVIVLLVCIWMGILSYRLIQNPERQAARKFFLFSIFHLFLINITIVVDHMI</sequence>
<dbReference type="EC" id="2.5.1.141" evidence="1"/>
<dbReference type="EMBL" id="CP000350">
    <property type="protein sequence ID" value="ABJ77206.1"/>
    <property type="molecule type" value="Genomic_DNA"/>
</dbReference>
<dbReference type="SMR" id="Q04PG4"/>
<dbReference type="KEGG" id="lbj:LBJ_2799"/>
<dbReference type="HOGENOM" id="CLU_029631_0_1_12"/>
<dbReference type="UniPathway" id="UPA00834">
    <property type="reaction ID" value="UER00712"/>
</dbReference>
<dbReference type="Proteomes" id="UP000000656">
    <property type="component" value="Chromosome 1"/>
</dbReference>
<dbReference type="GO" id="GO:0005886">
    <property type="term" value="C:plasma membrane"/>
    <property type="evidence" value="ECO:0007669"/>
    <property type="project" value="UniProtKB-SubCell"/>
</dbReference>
<dbReference type="GO" id="GO:0008495">
    <property type="term" value="F:protoheme IX farnesyltransferase activity"/>
    <property type="evidence" value="ECO:0007669"/>
    <property type="project" value="UniProtKB-UniRule"/>
</dbReference>
<dbReference type="GO" id="GO:0048034">
    <property type="term" value="P:heme O biosynthetic process"/>
    <property type="evidence" value="ECO:0007669"/>
    <property type="project" value="UniProtKB-UniRule"/>
</dbReference>
<dbReference type="CDD" id="cd13957">
    <property type="entry name" value="PT_UbiA_Cox10"/>
    <property type="match status" value="1"/>
</dbReference>
<dbReference type="FunFam" id="1.10.357.140:FF:000006">
    <property type="entry name" value="Protoheme IX farnesyltransferase, mitochondrial"/>
    <property type="match status" value="1"/>
</dbReference>
<dbReference type="Gene3D" id="1.10.357.140">
    <property type="entry name" value="UbiA prenyltransferase"/>
    <property type="match status" value="1"/>
</dbReference>
<dbReference type="HAMAP" id="MF_00154">
    <property type="entry name" value="CyoE_CtaB"/>
    <property type="match status" value="1"/>
</dbReference>
<dbReference type="InterPro" id="IPR006369">
    <property type="entry name" value="Protohaem_IX_farnesylTrfase"/>
</dbReference>
<dbReference type="InterPro" id="IPR000537">
    <property type="entry name" value="UbiA_prenyltransferase"/>
</dbReference>
<dbReference type="InterPro" id="IPR044878">
    <property type="entry name" value="UbiA_sf"/>
</dbReference>
<dbReference type="NCBIfam" id="TIGR01473">
    <property type="entry name" value="cyoE_ctaB"/>
    <property type="match status" value="1"/>
</dbReference>
<dbReference type="NCBIfam" id="NF003349">
    <property type="entry name" value="PRK04375.1-2"/>
    <property type="match status" value="1"/>
</dbReference>
<dbReference type="PANTHER" id="PTHR43448:SF7">
    <property type="entry name" value="4-HYDROXYBENZOATE SOLANESYLTRANSFERASE"/>
    <property type="match status" value="1"/>
</dbReference>
<dbReference type="PANTHER" id="PTHR43448">
    <property type="entry name" value="PROTOHEME IX FARNESYLTRANSFERASE, MITOCHONDRIAL"/>
    <property type="match status" value="1"/>
</dbReference>
<dbReference type="Pfam" id="PF01040">
    <property type="entry name" value="UbiA"/>
    <property type="match status" value="1"/>
</dbReference>